<keyword id="KW-0175">Coiled coil</keyword>
<keyword id="KW-0238">DNA-binding</keyword>
<keyword id="KW-0804">Transcription</keyword>
<keyword id="KW-0805">Transcription regulation</keyword>
<proteinExistence type="inferred from homology"/>
<feature type="chain" id="PRO_1000094196" description="Transcription elongation factor GreA">
    <location>
        <begin position="1"/>
        <end position="157"/>
    </location>
</feature>
<feature type="region of interest" description="Disordered" evidence="2">
    <location>
        <begin position="113"/>
        <end position="142"/>
    </location>
</feature>
<feature type="coiled-coil region" evidence="1">
    <location>
        <begin position="13"/>
        <end position="75"/>
    </location>
</feature>
<organism>
    <name type="scientific">Roseiflexus sp. (strain RS-1)</name>
    <dbReference type="NCBI Taxonomy" id="357808"/>
    <lineage>
        <taxon>Bacteria</taxon>
        <taxon>Bacillati</taxon>
        <taxon>Chloroflexota</taxon>
        <taxon>Chloroflexia</taxon>
        <taxon>Chloroflexales</taxon>
        <taxon>Roseiflexineae</taxon>
        <taxon>Roseiflexaceae</taxon>
        <taxon>Roseiflexus</taxon>
    </lineage>
</organism>
<comment type="function">
    <text evidence="1">Necessary for efficient RNA polymerase transcription elongation past template-encoded arresting sites. The arresting sites in DNA have the property of trapping a certain fraction of elongating RNA polymerases that pass through, resulting in locked ternary complexes. Cleavage of the nascent transcript by cleavage factors such as GreA or GreB allows the resumption of elongation from the new 3'terminus. GreA releases sequences of 2 to 3 nucleotides.</text>
</comment>
<comment type="similarity">
    <text evidence="1">Belongs to the GreA/GreB family.</text>
</comment>
<reference key="1">
    <citation type="submission" date="2007-04" db="EMBL/GenBank/DDBJ databases">
        <title>Complete sequence of Roseiflexus sp. RS-1.</title>
        <authorList>
            <consortium name="US DOE Joint Genome Institute"/>
            <person name="Copeland A."/>
            <person name="Lucas S."/>
            <person name="Lapidus A."/>
            <person name="Barry K."/>
            <person name="Detter J.C."/>
            <person name="Glavina del Rio T."/>
            <person name="Hammon N."/>
            <person name="Israni S."/>
            <person name="Dalin E."/>
            <person name="Tice H."/>
            <person name="Pitluck S."/>
            <person name="Chertkov O."/>
            <person name="Brettin T."/>
            <person name="Bruce D."/>
            <person name="Han C."/>
            <person name="Schmutz J."/>
            <person name="Larimer F."/>
            <person name="Land M."/>
            <person name="Hauser L."/>
            <person name="Kyrpides N."/>
            <person name="Mikhailova N."/>
            <person name="Bryant D.A."/>
            <person name="Richardson P."/>
        </authorList>
    </citation>
    <scope>NUCLEOTIDE SEQUENCE [LARGE SCALE GENOMIC DNA]</scope>
    <source>
        <strain>RS-1</strain>
    </source>
</reference>
<evidence type="ECO:0000255" key="1">
    <source>
        <dbReference type="HAMAP-Rule" id="MF_00105"/>
    </source>
</evidence>
<evidence type="ECO:0000256" key="2">
    <source>
        <dbReference type="SAM" id="MobiDB-lite"/>
    </source>
</evidence>
<name>GREA_ROSS1</name>
<dbReference type="EMBL" id="CP000686">
    <property type="protein sequence ID" value="ABQ88518.1"/>
    <property type="molecule type" value="Genomic_DNA"/>
</dbReference>
<dbReference type="RefSeq" id="WP_011954878.1">
    <property type="nucleotide sequence ID" value="NC_009523.1"/>
</dbReference>
<dbReference type="SMR" id="A5UPG5"/>
<dbReference type="STRING" id="357808.RoseRS_0077"/>
<dbReference type="KEGG" id="rrs:RoseRS_0077"/>
<dbReference type="eggNOG" id="COG0782">
    <property type="taxonomic scope" value="Bacteria"/>
</dbReference>
<dbReference type="HOGENOM" id="CLU_101379_2_1_0"/>
<dbReference type="OrthoDB" id="9808774at2"/>
<dbReference type="Proteomes" id="UP000006554">
    <property type="component" value="Chromosome"/>
</dbReference>
<dbReference type="GO" id="GO:0003677">
    <property type="term" value="F:DNA binding"/>
    <property type="evidence" value="ECO:0007669"/>
    <property type="project" value="UniProtKB-UniRule"/>
</dbReference>
<dbReference type="GO" id="GO:0070063">
    <property type="term" value="F:RNA polymerase binding"/>
    <property type="evidence" value="ECO:0007669"/>
    <property type="project" value="InterPro"/>
</dbReference>
<dbReference type="GO" id="GO:0006354">
    <property type="term" value="P:DNA-templated transcription elongation"/>
    <property type="evidence" value="ECO:0007669"/>
    <property type="project" value="TreeGrafter"/>
</dbReference>
<dbReference type="GO" id="GO:0032784">
    <property type="term" value="P:regulation of DNA-templated transcription elongation"/>
    <property type="evidence" value="ECO:0007669"/>
    <property type="project" value="UniProtKB-UniRule"/>
</dbReference>
<dbReference type="FunFam" id="1.10.287.180:FF:000001">
    <property type="entry name" value="Transcription elongation factor GreA"/>
    <property type="match status" value="1"/>
</dbReference>
<dbReference type="FunFam" id="3.10.50.30:FF:000001">
    <property type="entry name" value="Transcription elongation factor GreA"/>
    <property type="match status" value="1"/>
</dbReference>
<dbReference type="Gene3D" id="3.10.50.30">
    <property type="entry name" value="Transcription elongation factor, GreA/GreB, C-terminal domain"/>
    <property type="match status" value="1"/>
</dbReference>
<dbReference type="Gene3D" id="1.10.287.180">
    <property type="entry name" value="Transcription elongation factor, GreA/GreB, N-terminal domain"/>
    <property type="match status" value="1"/>
</dbReference>
<dbReference type="HAMAP" id="MF_00105">
    <property type="entry name" value="GreA_GreB"/>
    <property type="match status" value="1"/>
</dbReference>
<dbReference type="InterPro" id="IPR036953">
    <property type="entry name" value="GreA/GreB_C_sf"/>
</dbReference>
<dbReference type="InterPro" id="IPR006359">
    <property type="entry name" value="Tscrpt_elong_fac_GreA"/>
</dbReference>
<dbReference type="InterPro" id="IPR028624">
    <property type="entry name" value="Tscrpt_elong_fac_GreA/B"/>
</dbReference>
<dbReference type="InterPro" id="IPR001437">
    <property type="entry name" value="Tscrpt_elong_fac_GreA/B_C"/>
</dbReference>
<dbReference type="InterPro" id="IPR023459">
    <property type="entry name" value="Tscrpt_elong_fac_GreA/B_fam"/>
</dbReference>
<dbReference type="InterPro" id="IPR022691">
    <property type="entry name" value="Tscrpt_elong_fac_GreA/B_N"/>
</dbReference>
<dbReference type="InterPro" id="IPR036805">
    <property type="entry name" value="Tscrpt_elong_fac_GreA/B_N_sf"/>
</dbReference>
<dbReference type="NCBIfam" id="TIGR01462">
    <property type="entry name" value="greA"/>
    <property type="match status" value="1"/>
</dbReference>
<dbReference type="NCBIfam" id="NF001263">
    <property type="entry name" value="PRK00226.1-4"/>
    <property type="match status" value="1"/>
</dbReference>
<dbReference type="PANTHER" id="PTHR30437">
    <property type="entry name" value="TRANSCRIPTION ELONGATION FACTOR GREA"/>
    <property type="match status" value="1"/>
</dbReference>
<dbReference type="PANTHER" id="PTHR30437:SF4">
    <property type="entry name" value="TRANSCRIPTION ELONGATION FACTOR GREA"/>
    <property type="match status" value="1"/>
</dbReference>
<dbReference type="Pfam" id="PF01272">
    <property type="entry name" value="GreA_GreB"/>
    <property type="match status" value="1"/>
</dbReference>
<dbReference type="Pfam" id="PF03449">
    <property type="entry name" value="GreA_GreB_N"/>
    <property type="match status" value="1"/>
</dbReference>
<dbReference type="PIRSF" id="PIRSF006092">
    <property type="entry name" value="GreA_GreB"/>
    <property type="match status" value="1"/>
</dbReference>
<dbReference type="SUPFAM" id="SSF54534">
    <property type="entry name" value="FKBP-like"/>
    <property type="match status" value="1"/>
</dbReference>
<dbReference type="SUPFAM" id="SSF46557">
    <property type="entry name" value="GreA transcript cleavage protein, N-terminal domain"/>
    <property type="match status" value="1"/>
</dbReference>
<gene>
    <name evidence="1" type="primary">greA</name>
    <name type="ordered locus">RoseRS_0077</name>
</gene>
<accession>A5UPG5</accession>
<sequence>MSDKPAYLTRDGRARLEAELEELVTKGRKEIAERINAAKELGDISESGEYEDAKNQQAHLEGRIREIKSILARAQIIDEENGDNHEVRIGSRVTVRIDGEDGEETWTIVGSTEAKPSEGKISNESPIGSALLGKRPRQKVTVETPSGTMKLTIVDIQ</sequence>
<protein>
    <recommendedName>
        <fullName evidence="1">Transcription elongation factor GreA</fullName>
    </recommendedName>
    <alternativeName>
        <fullName evidence="1">Transcript cleavage factor GreA</fullName>
    </alternativeName>
</protein>